<protein>
    <recommendedName>
        <fullName evidence="1">Polyribonucleotide nucleotidyltransferase</fullName>
        <ecNumber evidence="1">2.7.7.8</ecNumber>
    </recommendedName>
    <alternativeName>
        <fullName evidence="1">Polynucleotide phosphorylase</fullName>
        <shortName evidence="1">PNPase</shortName>
    </alternativeName>
</protein>
<name>PNP_VEREI</name>
<keyword id="KW-0963">Cytoplasm</keyword>
<keyword id="KW-0460">Magnesium</keyword>
<keyword id="KW-0479">Metal-binding</keyword>
<keyword id="KW-0548">Nucleotidyltransferase</keyword>
<keyword id="KW-1185">Reference proteome</keyword>
<keyword id="KW-0694">RNA-binding</keyword>
<keyword id="KW-0808">Transferase</keyword>
<sequence length="757" mass="81680">MGIFNKVTKTFQWGDQTVVMETGEIARQASGAVLVSIDDTVVLATVVASRSIKPGQDFFPLTVDYIEKTYAAGKIPGSFFKREAKPSEHETLTSRLIDRPLRPLFPQGFFNEVHLVIHTLSLNPEVDADIAALIASSAALALSGIPFNGPIGAARVGYIQGEYRLNPGPTARKSSQLDLVVAGTEAAVLMVESEAQQLSEEIMLGAVVFGHQQGKVAIDAIHELVHAAGKPVWQWEAPARDEALIARVAALADDKLRAAYQIRNKQARTEACRAAYAAVLAQLQADGVECDTVKAEGLLFDIEAGIVRSQILAGEPRIDGRDTRTVRPIEIRAGVLPRAHGSALFTRGETQALAVATLGTERDAQRIDALAGEYDDRFMLHYNMPPFATGEVGRMGSTKRREIGHGRLAKRALVAVLPTKEEFPYTMRVVSEITESNGSSSMASVCGGCLSLMDAGVPMKAHVAGIAMGLIKDGNRFAVLTDILGDEDHLGDMDFKVAGTTAGITALQMDIKIQGITREIMQVALAQAKEARMHILGKMQQAIGQAKTEVSNFAPKLYTMKINAEKIRDVIGKGGAVIRALTEETGCQINIEEDGTITIAATDAAKADIAKRRIEQITAEIEIGKIYEGPVTKLLDFGALINLLPGKDGLLHISQIAHERVERVSDYLSEGQIVRVKVMEADERGRVKLSMKVLAERPAPGSDRFGTGSERPAPGSDRPALAEREPRREMRDHGHPPSEQQQQQSPPADTGSGQRVG</sequence>
<reference key="1">
    <citation type="submission" date="2006-12" db="EMBL/GenBank/DDBJ databases">
        <title>Complete sequence of chromosome 1 of Verminephrobacter eiseniae EF01-2.</title>
        <authorList>
            <person name="Copeland A."/>
            <person name="Lucas S."/>
            <person name="Lapidus A."/>
            <person name="Barry K."/>
            <person name="Detter J.C."/>
            <person name="Glavina del Rio T."/>
            <person name="Dalin E."/>
            <person name="Tice H."/>
            <person name="Pitluck S."/>
            <person name="Chertkov O."/>
            <person name="Brettin T."/>
            <person name="Bruce D."/>
            <person name="Han C."/>
            <person name="Tapia R."/>
            <person name="Gilna P."/>
            <person name="Schmutz J."/>
            <person name="Larimer F."/>
            <person name="Land M."/>
            <person name="Hauser L."/>
            <person name="Kyrpides N."/>
            <person name="Kim E."/>
            <person name="Stahl D."/>
            <person name="Richardson P."/>
        </authorList>
    </citation>
    <scope>NUCLEOTIDE SEQUENCE [LARGE SCALE GENOMIC DNA]</scope>
    <source>
        <strain>EF01-2</strain>
    </source>
</reference>
<gene>
    <name evidence="1" type="primary">pnp</name>
    <name type="ordered locus">Veis_2817</name>
</gene>
<organism>
    <name type="scientific">Verminephrobacter eiseniae (strain EF01-2)</name>
    <dbReference type="NCBI Taxonomy" id="391735"/>
    <lineage>
        <taxon>Bacteria</taxon>
        <taxon>Pseudomonadati</taxon>
        <taxon>Pseudomonadota</taxon>
        <taxon>Betaproteobacteria</taxon>
        <taxon>Burkholderiales</taxon>
        <taxon>Comamonadaceae</taxon>
        <taxon>Verminephrobacter</taxon>
    </lineage>
</organism>
<evidence type="ECO:0000255" key="1">
    <source>
        <dbReference type="HAMAP-Rule" id="MF_01595"/>
    </source>
</evidence>
<evidence type="ECO:0000256" key="2">
    <source>
        <dbReference type="SAM" id="MobiDB-lite"/>
    </source>
</evidence>
<dbReference type="EC" id="2.7.7.8" evidence="1"/>
<dbReference type="EMBL" id="CP000542">
    <property type="protein sequence ID" value="ABM58555.1"/>
    <property type="molecule type" value="Genomic_DNA"/>
</dbReference>
<dbReference type="RefSeq" id="WP_011810552.1">
    <property type="nucleotide sequence ID" value="NC_008786.1"/>
</dbReference>
<dbReference type="SMR" id="A1WLP8"/>
<dbReference type="STRING" id="391735.Veis_2817"/>
<dbReference type="GeneID" id="76461316"/>
<dbReference type="KEGG" id="vei:Veis_2817"/>
<dbReference type="eggNOG" id="COG1185">
    <property type="taxonomic scope" value="Bacteria"/>
</dbReference>
<dbReference type="HOGENOM" id="CLU_004217_2_2_4"/>
<dbReference type="OrthoDB" id="9804305at2"/>
<dbReference type="Proteomes" id="UP000000374">
    <property type="component" value="Chromosome"/>
</dbReference>
<dbReference type="GO" id="GO:0005829">
    <property type="term" value="C:cytosol"/>
    <property type="evidence" value="ECO:0007669"/>
    <property type="project" value="TreeGrafter"/>
</dbReference>
<dbReference type="GO" id="GO:0000175">
    <property type="term" value="F:3'-5'-RNA exonuclease activity"/>
    <property type="evidence" value="ECO:0007669"/>
    <property type="project" value="TreeGrafter"/>
</dbReference>
<dbReference type="GO" id="GO:0000287">
    <property type="term" value="F:magnesium ion binding"/>
    <property type="evidence" value="ECO:0007669"/>
    <property type="project" value="UniProtKB-UniRule"/>
</dbReference>
<dbReference type="GO" id="GO:0004654">
    <property type="term" value="F:polyribonucleotide nucleotidyltransferase activity"/>
    <property type="evidence" value="ECO:0007669"/>
    <property type="project" value="UniProtKB-UniRule"/>
</dbReference>
<dbReference type="GO" id="GO:0003723">
    <property type="term" value="F:RNA binding"/>
    <property type="evidence" value="ECO:0007669"/>
    <property type="project" value="UniProtKB-UniRule"/>
</dbReference>
<dbReference type="GO" id="GO:0006402">
    <property type="term" value="P:mRNA catabolic process"/>
    <property type="evidence" value="ECO:0007669"/>
    <property type="project" value="UniProtKB-UniRule"/>
</dbReference>
<dbReference type="GO" id="GO:0006396">
    <property type="term" value="P:RNA processing"/>
    <property type="evidence" value="ECO:0007669"/>
    <property type="project" value="InterPro"/>
</dbReference>
<dbReference type="CDD" id="cd02393">
    <property type="entry name" value="KH-I_PNPase"/>
    <property type="match status" value="1"/>
</dbReference>
<dbReference type="CDD" id="cd11364">
    <property type="entry name" value="RNase_PH_PNPase_2"/>
    <property type="match status" value="1"/>
</dbReference>
<dbReference type="CDD" id="cd04472">
    <property type="entry name" value="S1_PNPase"/>
    <property type="match status" value="1"/>
</dbReference>
<dbReference type="FunFam" id="2.40.50.140:FF:000023">
    <property type="entry name" value="Polyribonucleotide nucleotidyltransferase"/>
    <property type="match status" value="1"/>
</dbReference>
<dbReference type="FunFam" id="3.30.1370.10:FF:000001">
    <property type="entry name" value="Polyribonucleotide nucleotidyltransferase"/>
    <property type="match status" value="1"/>
</dbReference>
<dbReference type="FunFam" id="3.30.230.70:FF:000001">
    <property type="entry name" value="Polyribonucleotide nucleotidyltransferase"/>
    <property type="match status" value="1"/>
</dbReference>
<dbReference type="FunFam" id="3.30.230.70:FF:000002">
    <property type="entry name" value="Polyribonucleotide nucleotidyltransferase"/>
    <property type="match status" value="1"/>
</dbReference>
<dbReference type="Gene3D" id="3.30.230.70">
    <property type="entry name" value="GHMP Kinase, N-terminal domain"/>
    <property type="match status" value="2"/>
</dbReference>
<dbReference type="Gene3D" id="3.30.1370.10">
    <property type="entry name" value="K Homology domain, type 1"/>
    <property type="match status" value="1"/>
</dbReference>
<dbReference type="Gene3D" id="2.40.50.140">
    <property type="entry name" value="Nucleic acid-binding proteins"/>
    <property type="match status" value="1"/>
</dbReference>
<dbReference type="HAMAP" id="MF_01595">
    <property type="entry name" value="PNPase"/>
    <property type="match status" value="1"/>
</dbReference>
<dbReference type="InterPro" id="IPR001247">
    <property type="entry name" value="ExoRNase_PH_dom1"/>
</dbReference>
<dbReference type="InterPro" id="IPR015847">
    <property type="entry name" value="ExoRNase_PH_dom2"/>
</dbReference>
<dbReference type="InterPro" id="IPR036345">
    <property type="entry name" value="ExoRNase_PH_dom2_sf"/>
</dbReference>
<dbReference type="InterPro" id="IPR004087">
    <property type="entry name" value="KH_dom"/>
</dbReference>
<dbReference type="InterPro" id="IPR004088">
    <property type="entry name" value="KH_dom_type_1"/>
</dbReference>
<dbReference type="InterPro" id="IPR036612">
    <property type="entry name" value="KH_dom_type_1_sf"/>
</dbReference>
<dbReference type="InterPro" id="IPR012340">
    <property type="entry name" value="NA-bd_OB-fold"/>
</dbReference>
<dbReference type="InterPro" id="IPR012162">
    <property type="entry name" value="PNPase"/>
</dbReference>
<dbReference type="InterPro" id="IPR027408">
    <property type="entry name" value="PNPase/RNase_PH_dom_sf"/>
</dbReference>
<dbReference type="InterPro" id="IPR015848">
    <property type="entry name" value="PNPase_PH_RNA-bd_bac/org-type"/>
</dbReference>
<dbReference type="InterPro" id="IPR036456">
    <property type="entry name" value="PNPase_PH_RNA-bd_sf"/>
</dbReference>
<dbReference type="InterPro" id="IPR020568">
    <property type="entry name" value="Ribosomal_Su5_D2-typ_SF"/>
</dbReference>
<dbReference type="InterPro" id="IPR003029">
    <property type="entry name" value="S1_domain"/>
</dbReference>
<dbReference type="NCBIfam" id="TIGR03591">
    <property type="entry name" value="polynuc_phos"/>
    <property type="match status" value="1"/>
</dbReference>
<dbReference type="NCBIfam" id="NF008805">
    <property type="entry name" value="PRK11824.1"/>
    <property type="match status" value="1"/>
</dbReference>
<dbReference type="PANTHER" id="PTHR11252">
    <property type="entry name" value="POLYRIBONUCLEOTIDE NUCLEOTIDYLTRANSFERASE"/>
    <property type="match status" value="1"/>
</dbReference>
<dbReference type="PANTHER" id="PTHR11252:SF0">
    <property type="entry name" value="POLYRIBONUCLEOTIDE NUCLEOTIDYLTRANSFERASE 1, MITOCHONDRIAL"/>
    <property type="match status" value="1"/>
</dbReference>
<dbReference type="Pfam" id="PF00013">
    <property type="entry name" value="KH_1"/>
    <property type="match status" value="1"/>
</dbReference>
<dbReference type="Pfam" id="PF03726">
    <property type="entry name" value="PNPase"/>
    <property type="match status" value="1"/>
</dbReference>
<dbReference type="Pfam" id="PF01138">
    <property type="entry name" value="RNase_PH"/>
    <property type="match status" value="2"/>
</dbReference>
<dbReference type="Pfam" id="PF03725">
    <property type="entry name" value="RNase_PH_C"/>
    <property type="match status" value="2"/>
</dbReference>
<dbReference type="Pfam" id="PF00575">
    <property type="entry name" value="S1"/>
    <property type="match status" value="1"/>
</dbReference>
<dbReference type="PIRSF" id="PIRSF005499">
    <property type="entry name" value="PNPase"/>
    <property type="match status" value="1"/>
</dbReference>
<dbReference type="SMART" id="SM00322">
    <property type="entry name" value="KH"/>
    <property type="match status" value="1"/>
</dbReference>
<dbReference type="SMART" id="SM00316">
    <property type="entry name" value="S1"/>
    <property type="match status" value="1"/>
</dbReference>
<dbReference type="SUPFAM" id="SSF54791">
    <property type="entry name" value="Eukaryotic type KH-domain (KH-domain type I)"/>
    <property type="match status" value="1"/>
</dbReference>
<dbReference type="SUPFAM" id="SSF50249">
    <property type="entry name" value="Nucleic acid-binding proteins"/>
    <property type="match status" value="1"/>
</dbReference>
<dbReference type="SUPFAM" id="SSF46915">
    <property type="entry name" value="Polynucleotide phosphorylase/guanosine pentaphosphate synthase (PNPase/GPSI), domain 3"/>
    <property type="match status" value="1"/>
</dbReference>
<dbReference type="SUPFAM" id="SSF55666">
    <property type="entry name" value="Ribonuclease PH domain 2-like"/>
    <property type="match status" value="2"/>
</dbReference>
<dbReference type="SUPFAM" id="SSF54211">
    <property type="entry name" value="Ribosomal protein S5 domain 2-like"/>
    <property type="match status" value="2"/>
</dbReference>
<dbReference type="PROSITE" id="PS50084">
    <property type="entry name" value="KH_TYPE_1"/>
    <property type="match status" value="1"/>
</dbReference>
<dbReference type="PROSITE" id="PS50126">
    <property type="entry name" value="S1"/>
    <property type="match status" value="1"/>
</dbReference>
<comment type="function">
    <text evidence="1">Involved in mRNA degradation. Catalyzes the phosphorolysis of single-stranded polyribonucleotides processively in the 3'- to 5'-direction.</text>
</comment>
<comment type="catalytic activity">
    <reaction evidence="1">
        <text>RNA(n+1) + phosphate = RNA(n) + a ribonucleoside 5'-diphosphate</text>
        <dbReference type="Rhea" id="RHEA:22096"/>
        <dbReference type="Rhea" id="RHEA-COMP:14527"/>
        <dbReference type="Rhea" id="RHEA-COMP:17342"/>
        <dbReference type="ChEBI" id="CHEBI:43474"/>
        <dbReference type="ChEBI" id="CHEBI:57930"/>
        <dbReference type="ChEBI" id="CHEBI:140395"/>
        <dbReference type="EC" id="2.7.7.8"/>
    </reaction>
</comment>
<comment type="cofactor">
    <cofactor evidence="1">
        <name>Mg(2+)</name>
        <dbReference type="ChEBI" id="CHEBI:18420"/>
    </cofactor>
</comment>
<comment type="subcellular location">
    <subcellularLocation>
        <location evidence="1">Cytoplasm</location>
    </subcellularLocation>
</comment>
<comment type="similarity">
    <text evidence="1">Belongs to the polyribonucleotide nucleotidyltransferase family.</text>
</comment>
<proteinExistence type="inferred from homology"/>
<accession>A1WLP8</accession>
<feature type="chain" id="PRO_0000329925" description="Polyribonucleotide nucleotidyltransferase">
    <location>
        <begin position="1"/>
        <end position="757"/>
    </location>
</feature>
<feature type="domain" description="KH" evidence="1">
    <location>
        <begin position="555"/>
        <end position="614"/>
    </location>
</feature>
<feature type="domain" description="S1 motif" evidence="1">
    <location>
        <begin position="624"/>
        <end position="692"/>
    </location>
</feature>
<feature type="region of interest" description="Disordered" evidence="2">
    <location>
        <begin position="693"/>
        <end position="757"/>
    </location>
</feature>
<feature type="compositionally biased region" description="Basic and acidic residues" evidence="2">
    <location>
        <begin position="720"/>
        <end position="736"/>
    </location>
</feature>
<feature type="compositionally biased region" description="Low complexity" evidence="2">
    <location>
        <begin position="737"/>
        <end position="747"/>
    </location>
</feature>
<feature type="binding site" evidence="1">
    <location>
        <position position="488"/>
    </location>
    <ligand>
        <name>Mg(2+)</name>
        <dbReference type="ChEBI" id="CHEBI:18420"/>
    </ligand>
</feature>
<feature type="binding site" evidence="1">
    <location>
        <position position="494"/>
    </location>
    <ligand>
        <name>Mg(2+)</name>
        <dbReference type="ChEBI" id="CHEBI:18420"/>
    </ligand>
</feature>